<protein>
    <recommendedName>
        <fullName>GTP-binding protein rho1</fullName>
    </recommendedName>
</protein>
<accession>Q09914</accession>
<keyword id="KW-0002">3D-structure</keyword>
<keyword id="KW-1003">Cell membrane</keyword>
<keyword id="KW-0342">GTP-binding</keyword>
<keyword id="KW-0449">Lipoprotein</keyword>
<keyword id="KW-0472">Membrane</keyword>
<keyword id="KW-0488">Methylation</keyword>
<keyword id="KW-0547">Nucleotide-binding</keyword>
<keyword id="KW-0636">Prenylation</keyword>
<keyword id="KW-1185">Reference proteome</keyword>
<comment type="function">
    <text evidence="2">Involved in the regulation of cell wall growth and actin cytoskeleton organization. Activates (1,3)-beta-D-glucan synthase.</text>
</comment>
<comment type="subcellular location">
    <subcellularLocation>
        <location evidence="2">Cell membrane</location>
        <topology evidence="2">Lipid-anchor</topology>
    </subcellularLocation>
    <text>Found at the growing tips of interphase cells and at the septum prior to cytokinesis.</text>
</comment>
<comment type="similarity">
    <text evidence="3">Belongs to the small GTPase superfamily. Rho family.</text>
</comment>
<gene>
    <name type="primary">rho1</name>
    <name type="ORF">SPAC1F7.04</name>
</gene>
<dbReference type="EMBL" id="D38180">
    <property type="protein sequence ID" value="BAA07377.1"/>
    <property type="molecule type" value="mRNA"/>
</dbReference>
<dbReference type="EMBL" id="CU329670">
    <property type="protein sequence ID" value="CAA91951.1"/>
    <property type="molecule type" value="Genomic_DNA"/>
</dbReference>
<dbReference type="PIR" id="JC4044">
    <property type="entry name" value="JC4044"/>
</dbReference>
<dbReference type="RefSeq" id="NP_594490.1">
    <property type="nucleotide sequence ID" value="NM_001019919.2"/>
</dbReference>
<dbReference type="PDB" id="8ETD">
    <property type="method" value="X-ray"/>
    <property type="resolution" value="2.78 A"/>
    <property type="chains" value="A/B=1-202"/>
</dbReference>
<dbReference type="PDBsum" id="8ETD"/>
<dbReference type="SMR" id="Q09914"/>
<dbReference type="BioGRID" id="278109">
    <property type="interactions" value="41"/>
</dbReference>
<dbReference type="FunCoup" id="Q09914">
    <property type="interactions" value="807"/>
</dbReference>
<dbReference type="IntAct" id="Q09914">
    <property type="interactions" value="1"/>
</dbReference>
<dbReference type="STRING" id="284812.Q09914"/>
<dbReference type="iPTMnet" id="Q09914"/>
<dbReference type="PaxDb" id="4896-SPAC1F7.04.1"/>
<dbReference type="EnsemblFungi" id="SPAC1F7.04.1">
    <property type="protein sequence ID" value="SPAC1F7.04.1:pep"/>
    <property type="gene ID" value="SPAC1F7.04"/>
</dbReference>
<dbReference type="GeneID" id="2541612"/>
<dbReference type="KEGG" id="spo:2541612"/>
<dbReference type="PomBase" id="SPAC1F7.04">
    <property type="gene designation" value="rho1"/>
</dbReference>
<dbReference type="VEuPathDB" id="FungiDB:SPAC1F7.04"/>
<dbReference type="eggNOG" id="KOG0393">
    <property type="taxonomic scope" value="Eukaryota"/>
</dbReference>
<dbReference type="HOGENOM" id="CLU_041217_21_2_1"/>
<dbReference type="InParanoid" id="Q09914"/>
<dbReference type="OMA" id="ENVYTKW"/>
<dbReference type="PhylomeDB" id="Q09914"/>
<dbReference type="Reactome" id="R-SPO-198203">
    <property type="pathway name" value="PI3K/AKT activation"/>
</dbReference>
<dbReference type="Reactome" id="R-SPO-392451">
    <property type="pathway name" value="G beta:gamma signalling through PI3Kgamma"/>
</dbReference>
<dbReference type="Reactome" id="R-SPO-416482">
    <property type="pathway name" value="G alpha (12/13) signalling events"/>
</dbReference>
<dbReference type="Reactome" id="R-SPO-5625740">
    <property type="pathway name" value="RHO GTPases activate PKNs"/>
</dbReference>
<dbReference type="Reactome" id="R-SPO-6798695">
    <property type="pathway name" value="Neutrophil degranulation"/>
</dbReference>
<dbReference type="Reactome" id="R-SPO-8980692">
    <property type="pathway name" value="RHOA GTPase cycle"/>
</dbReference>
<dbReference type="Reactome" id="R-SPO-9013026">
    <property type="pathway name" value="RHOB GTPase cycle"/>
</dbReference>
<dbReference type="Reactome" id="R-SPO-9013106">
    <property type="pathway name" value="RHOC GTPase cycle"/>
</dbReference>
<dbReference type="Reactome" id="R-SPO-9013405">
    <property type="pathway name" value="RHOD GTPase cycle"/>
</dbReference>
<dbReference type="Reactome" id="R-SPO-9035034">
    <property type="pathway name" value="RHOF GTPase cycle"/>
</dbReference>
<dbReference type="Reactome" id="R-SPO-9696264">
    <property type="pathway name" value="RND3 GTPase cycle"/>
</dbReference>
<dbReference type="Reactome" id="R-SPO-9696270">
    <property type="pathway name" value="RND2 GTPase cycle"/>
</dbReference>
<dbReference type="Reactome" id="R-SPO-9696273">
    <property type="pathway name" value="RND1 GTPase cycle"/>
</dbReference>
<dbReference type="PRO" id="PR:Q09914"/>
<dbReference type="Proteomes" id="UP000002485">
    <property type="component" value="Chromosome I"/>
</dbReference>
<dbReference type="GO" id="GO:1902716">
    <property type="term" value="C:cell cortex of growing cell tip"/>
    <property type="evidence" value="ECO:0000314"/>
    <property type="project" value="PomBase"/>
</dbReference>
<dbReference type="GO" id="GO:0032153">
    <property type="term" value="C:cell division site"/>
    <property type="evidence" value="ECO:0000314"/>
    <property type="project" value="PomBase"/>
</dbReference>
<dbReference type="GO" id="GO:0009898">
    <property type="term" value="C:cytoplasmic side of plasma membrane"/>
    <property type="evidence" value="ECO:0000303"/>
    <property type="project" value="PomBase"/>
</dbReference>
<dbReference type="GO" id="GO:0005829">
    <property type="term" value="C:cytosol"/>
    <property type="evidence" value="ECO:0007005"/>
    <property type="project" value="PomBase"/>
</dbReference>
<dbReference type="GO" id="GO:0000935">
    <property type="term" value="C:division septum"/>
    <property type="evidence" value="ECO:0000314"/>
    <property type="project" value="PomBase"/>
</dbReference>
<dbReference type="GO" id="GO:0035838">
    <property type="term" value="C:growing cell tip"/>
    <property type="evidence" value="ECO:0000314"/>
    <property type="project" value="PomBase"/>
</dbReference>
<dbReference type="GO" id="GO:0031097">
    <property type="term" value="C:medial cortex"/>
    <property type="evidence" value="ECO:0000314"/>
    <property type="project" value="PomBase"/>
</dbReference>
<dbReference type="GO" id="GO:0005634">
    <property type="term" value="C:nucleus"/>
    <property type="evidence" value="ECO:0007005"/>
    <property type="project" value="PomBase"/>
</dbReference>
<dbReference type="GO" id="GO:0005886">
    <property type="term" value="C:plasma membrane"/>
    <property type="evidence" value="ECO:0000318"/>
    <property type="project" value="GO_Central"/>
</dbReference>
<dbReference type="GO" id="GO:0140453">
    <property type="term" value="C:protein aggregate center"/>
    <property type="evidence" value="ECO:0000314"/>
    <property type="project" value="PomBase"/>
</dbReference>
<dbReference type="GO" id="GO:0019003">
    <property type="term" value="F:GDP binding"/>
    <property type="evidence" value="ECO:0000314"/>
    <property type="project" value="PomBase"/>
</dbReference>
<dbReference type="GO" id="GO:0005525">
    <property type="term" value="F:GTP binding"/>
    <property type="evidence" value="ECO:0000318"/>
    <property type="project" value="GO_Central"/>
</dbReference>
<dbReference type="GO" id="GO:0003924">
    <property type="term" value="F:GTPase activity"/>
    <property type="evidence" value="ECO:0000314"/>
    <property type="project" value="PomBase"/>
</dbReference>
<dbReference type="GO" id="GO:0019901">
    <property type="term" value="F:protein kinase binding"/>
    <property type="evidence" value="ECO:0000318"/>
    <property type="project" value="GO_Central"/>
</dbReference>
<dbReference type="GO" id="GO:0043539">
    <property type="term" value="F:protein serine/threonine kinase activator activity"/>
    <property type="evidence" value="ECO:0000269"/>
    <property type="project" value="PomBase"/>
</dbReference>
<dbReference type="GO" id="GO:0035591">
    <property type="term" value="F:signaling adaptor activity"/>
    <property type="evidence" value="ECO:0000353"/>
    <property type="project" value="PomBase"/>
</dbReference>
<dbReference type="GO" id="GO:0007015">
    <property type="term" value="P:actin filament organization"/>
    <property type="evidence" value="ECO:0000318"/>
    <property type="project" value="GO_Central"/>
</dbReference>
<dbReference type="GO" id="GO:0060635">
    <property type="term" value="P:positive regulation of (1-&gt;3)-beta-D-glucan biosynthetic process"/>
    <property type="evidence" value="ECO:0000315"/>
    <property type="project" value="PomBase"/>
</dbReference>
<dbReference type="GO" id="GO:1903139">
    <property type="term" value="P:positive regulation of cell integrity MAPK cascade"/>
    <property type="evidence" value="ECO:0000315"/>
    <property type="project" value="PomBase"/>
</dbReference>
<dbReference type="GO" id="GO:0140281">
    <property type="term" value="P:positive regulation of mitotic division septum assembly"/>
    <property type="evidence" value="ECO:0000269"/>
    <property type="project" value="PomBase"/>
</dbReference>
<dbReference type="GO" id="GO:1905758">
    <property type="term" value="P:positive regulation of primary cell septum biogenesis"/>
    <property type="evidence" value="ECO:0000315"/>
    <property type="project" value="PomBase"/>
</dbReference>
<dbReference type="GO" id="GO:0140748">
    <property type="term" value="P:positive regulation of regulation of ascospore wall (1-&gt;3)-beta-D-glucan biosynthetic process"/>
    <property type="evidence" value="ECO:0000315"/>
    <property type="project" value="PomBase"/>
</dbReference>
<dbReference type="GO" id="GO:0032956">
    <property type="term" value="P:regulation of actin cytoskeleton organization"/>
    <property type="evidence" value="ECO:0000315"/>
    <property type="project" value="PomBase"/>
</dbReference>
<dbReference type="GO" id="GO:0090334">
    <property type="term" value="P:regulation of cell wall (1-&gt;3)-beta-D-glucan biosynthetic process"/>
    <property type="evidence" value="ECO:0000315"/>
    <property type="project" value="PomBase"/>
</dbReference>
<dbReference type="GO" id="GO:0032955">
    <property type="term" value="P:regulation of division septum assembly"/>
    <property type="evidence" value="ECO:0000315"/>
    <property type="project" value="PomBase"/>
</dbReference>
<dbReference type="GO" id="GO:0030100">
    <property type="term" value="P:regulation of endocytosis"/>
    <property type="evidence" value="ECO:0000266"/>
    <property type="project" value="PomBase"/>
</dbReference>
<dbReference type="GO" id="GO:2000769">
    <property type="term" value="P:regulation of establishment or maintenance of cell polarity regulating cell shape"/>
    <property type="evidence" value="ECO:0000315"/>
    <property type="project" value="PomBase"/>
</dbReference>
<dbReference type="GO" id="GO:0070610">
    <property type="term" value="P:regulation of fungal-type cell wall (1-&gt;3)-alpha-glucan biosynthetic process"/>
    <property type="evidence" value="ECO:0000315"/>
    <property type="project" value="PomBase"/>
</dbReference>
<dbReference type="GO" id="GO:0032995">
    <property type="term" value="P:regulation of fungal-type cell wall biogenesis"/>
    <property type="evidence" value="ECO:0000316"/>
    <property type="project" value="PomBase"/>
</dbReference>
<dbReference type="GO" id="GO:0007165">
    <property type="term" value="P:signal transduction"/>
    <property type="evidence" value="ECO:0000318"/>
    <property type="project" value="GO_Central"/>
</dbReference>
<dbReference type="GO" id="GO:0007264">
    <property type="term" value="P:small GTPase-mediated signal transduction"/>
    <property type="evidence" value="ECO:0007669"/>
    <property type="project" value="InterPro"/>
</dbReference>
<dbReference type="CDD" id="cd01870">
    <property type="entry name" value="RhoA_like"/>
    <property type="match status" value="1"/>
</dbReference>
<dbReference type="FunFam" id="3.40.50.300:FF:000329">
    <property type="entry name" value="GTP-binding protein rhoA"/>
    <property type="match status" value="1"/>
</dbReference>
<dbReference type="Gene3D" id="3.40.50.300">
    <property type="entry name" value="P-loop containing nucleotide triphosphate hydrolases"/>
    <property type="match status" value="1"/>
</dbReference>
<dbReference type="InterPro" id="IPR027417">
    <property type="entry name" value="P-loop_NTPase"/>
</dbReference>
<dbReference type="InterPro" id="IPR005225">
    <property type="entry name" value="Small_GTP-bd"/>
</dbReference>
<dbReference type="InterPro" id="IPR001806">
    <property type="entry name" value="Small_GTPase"/>
</dbReference>
<dbReference type="InterPro" id="IPR003578">
    <property type="entry name" value="Small_GTPase_Rho"/>
</dbReference>
<dbReference type="NCBIfam" id="TIGR00231">
    <property type="entry name" value="small_GTP"/>
    <property type="match status" value="1"/>
</dbReference>
<dbReference type="PANTHER" id="PTHR24072">
    <property type="entry name" value="RHO FAMILY GTPASE"/>
    <property type="match status" value="1"/>
</dbReference>
<dbReference type="Pfam" id="PF00071">
    <property type="entry name" value="Ras"/>
    <property type="match status" value="1"/>
</dbReference>
<dbReference type="PRINTS" id="PR00449">
    <property type="entry name" value="RASTRNSFRMNG"/>
</dbReference>
<dbReference type="SMART" id="SM00175">
    <property type="entry name" value="RAB"/>
    <property type="match status" value="1"/>
</dbReference>
<dbReference type="SMART" id="SM00173">
    <property type="entry name" value="RAS"/>
    <property type="match status" value="1"/>
</dbReference>
<dbReference type="SMART" id="SM00174">
    <property type="entry name" value="RHO"/>
    <property type="match status" value="1"/>
</dbReference>
<dbReference type="SUPFAM" id="SSF52540">
    <property type="entry name" value="P-loop containing nucleoside triphosphate hydrolases"/>
    <property type="match status" value="1"/>
</dbReference>
<dbReference type="PROSITE" id="PS51420">
    <property type="entry name" value="RHO"/>
    <property type="match status" value="1"/>
</dbReference>
<reference key="1">
    <citation type="journal article" date="1995" name="Gene">
        <title>Isolation and sequencing of two cDNA clones encoding Rho proteins from the fission yeast Schizosaccharomyces pombe.</title>
        <authorList>
            <person name="Nakano K."/>
            <person name="Mabuchi I."/>
        </authorList>
    </citation>
    <scope>NUCLEOTIDE SEQUENCE [MRNA]</scope>
    <source>
        <strain>JY450</strain>
    </source>
</reference>
<reference key="2">
    <citation type="journal article" date="2002" name="Nature">
        <title>The genome sequence of Schizosaccharomyces pombe.</title>
        <authorList>
            <person name="Wood V."/>
            <person name="Gwilliam R."/>
            <person name="Rajandream M.A."/>
            <person name="Lyne M.H."/>
            <person name="Lyne R."/>
            <person name="Stewart A."/>
            <person name="Sgouros J.G."/>
            <person name="Peat N."/>
            <person name="Hayles J."/>
            <person name="Baker S.G."/>
            <person name="Basham D."/>
            <person name="Bowman S."/>
            <person name="Brooks K."/>
            <person name="Brown D."/>
            <person name="Brown S."/>
            <person name="Chillingworth T."/>
            <person name="Churcher C.M."/>
            <person name="Collins M."/>
            <person name="Connor R."/>
            <person name="Cronin A."/>
            <person name="Davis P."/>
            <person name="Feltwell T."/>
            <person name="Fraser A."/>
            <person name="Gentles S."/>
            <person name="Goble A."/>
            <person name="Hamlin N."/>
            <person name="Harris D.E."/>
            <person name="Hidalgo J."/>
            <person name="Hodgson G."/>
            <person name="Holroyd S."/>
            <person name="Hornsby T."/>
            <person name="Howarth S."/>
            <person name="Huckle E.J."/>
            <person name="Hunt S."/>
            <person name="Jagels K."/>
            <person name="James K.D."/>
            <person name="Jones L."/>
            <person name="Jones M."/>
            <person name="Leather S."/>
            <person name="McDonald S."/>
            <person name="McLean J."/>
            <person name="Mooney P."/>
            <person name="Moule S."/>
            <person name="Mungall K.L."/>
            <person name="Murphy L.D."/>
            <person name="Niblett D."/>
            <person name="Odell C."/>
            <person name="Oliver K."/>
            <person name="O'Neil S."/>
            <person name="Pearson D."/>
            <person name="Quail M.A."/>
            <person name="Rabbinowitsch E."/>
            <person name="Rutherford K.M."/>
            <person name="Rutter S."/>
            <person name="Saunders D."/>
            <person name="Seeger K."/>
            <person name="Sharp S."/>
            <person name="Skelton J."/>
            <person name="Simmonds M.N."/>
            <person name="Squares R."/>
            <person name="Squares S."/>
            <person name="Stevens K."/>
            <person name="Taylor K."/>
            <person name="Taylor R.G."/>
            <person name="Tivey A."/>
            <person name="Walsh S.V."/>
            <person name="Warren T."/>
            <person name="Whitehead S."/>
            <person name="Woodward J.R."/>
            <person name="Volckaert G."/>
            <person name="Aert R."/>
            <person name="Robben J."/>
            <person name="Grymonprez B."/>
            <person name="Weltjens I."/>
            <person name="Vanstreels E."/>
            <person name="Rieger M."/>
            <person name="Schaefer M."/>
            <person name="Mueller-Auer S."/>
            <person name="Gabel C."/>
            <person name="Fuchs M."/>
            <person name="Duesterhoeft A."/>
            <person name="Fritzc C."/>
            <person name="Holzer E."/>
            <person name="Moestl D."/>
            <person name="Hilbert H."/>
            <person name="Borzym K."/>
            <person name="Langer I."/>
            <person name="Beck A."/>
            <person name="Lehrach H."/>
            <person name="Reinhardt R."/>
            <person name="Pohl T.M."/>
            <person name="Eger P."/>
            <person name="Zimmermann W."/>
            <person name="Wedler H."/>
            <person name="Wambutt R."/>
            <person name="Purnelle B."/>
            <person name="Goffeau A."/>
            <person name="Cadieu E."/>
            <person name="Dreano S."/>
            <person name="Gloux S."/>
            <person name="Lelaure V."/>
            <person name="Mottier S."/>
            <person name="Galibert F."/>
            <person name="Aves S.J."/>
            <person name="Xiang Z."/>
            <person name="Hunt C."/>
            <person name="Moore K."/>
            <person name="Hurst S.M."/>
            <person name="Lucas M."/>
            <person name="Rochet M."/>
            <person name="Gaillardin C."/>
            <person name="Tallada V.A."/>
            <person name="Garzon A."/>
            <person name="Thode G."/>
            <person name="Daga R.R."/>
            <person name="Cruzado L."/>
            <person name="Jimenez J."/>
            <person name="Sanchez M."/>
            <person name="del Rey F."/>
            <person name="Benito J."/>
            <person name="Dominguez A."/>
            <person name="Revuelta J.L."/>
            <person name="Moreno S."/>
            <person name="Armstrong J."/>
            <person name="Forsburg S.L."/>
            <person name="Cerutti L."/>
            <person name="Lowe T."/>
            <person name="McCombie W.R."/>
            <person name="Paulsen I."/>
            <person name="Potashkin J."/>
            <person name="Shpakovski G.V."/>
            <person name="Ussery D."/>
            <person name="Barrell B.G."/>
            <person name="Nurse P."/>
        </authorList>
    </citation>
    <scope>NUCLEOTIDE SEQUENCE [LARGE SCALE GENOMIC DNA]</scope>
    <source>
        <strain>972 / ATCC 24843</strain>
    </source>
</reference>
<reference key="3">
    <citation type="journal article" date="1997" name="J. Cell Sci.">
        <title>Localisation of the Schizosaccharomyces pombe rho1p GTPase and its involvement in the organisation of the actin cytoskeleton.</title>
        <authorList>
            <person name="Arellano M."/>
            <person name="Duran A."/>
            <person name="Perez P."/>
        </authorList>
    </citation>
    <scope>FUNCTION</scope>
    <scope>SUBCELLULAR LOCATION</scope>
</reference>
<sequence length="202" mass="22523">MATELRRKLVIVGDGACGKTCLLIVFSKGTFPEVYVPTVFENYVADVEVDGRHVELALWDTAGQEDYDRLRPLSYPDSHVILICFAVDSPDSLDNVQEKWISEVLHFCSSLPILLVACKADLRNDPKIIEELSKTNQHPVTTEEGQAVAQKIGAYKYLECSAKTNEGVREVFESATRAAMLKHKPKVKPSSGTKKKKRCILL</sequence>
<feature type="chain" id="PRO_0000198940" description="GTP-binding protein rho1">
    <location>
        <begin position="1"/>
        <end position="199"/>
    </location>
</feature>
<feature type="propeptide" id="PRO_0000281270" description="Removed in mature form" evidence="1">
    <location>
        <begin position="200"/>
        <end position="202"/>
    </location>
</feature>
<feature type="short sequence motif" description="Effector region" evidence="1">
    <location>
        <begin position="35"/>
        <end position="43"/>
    </location>
</feature>
<feature type="binding site" evidence="1">
    <location>
        <begin position="13"/>
        <end position="20"/>
    </location>
    <ligand>
        <name>GTP</name>
        <dbReference type="ChEBI" id="CHEBI:37565"/>
    </ligand>
</feature>
<feature type="binding site" evidence="1">
    <location>
        <begin position="60"/>
        <end position="64"/>
    </location>
    <ligand>
        <name>GTP</name>
        <dbReference type="ChEBI" id="CHEBI:37565"/>
    </ligand>
</feature>
<feature type="binding site" evidence="1">
    <location>
        <begin position="118"/>
        <end position="121"/>
    </location>
    <ligand>
        <name>GTP</name>
        <dbReference type="ChEBI" id="CHEBI:37565"/>
    </ligand>
</feature>
<feature type="modified residue" description="Cysteine methyl ester" evidence="1">
    <location>
        <position position="199"/>
    </location>
</feature>
<feature type="lipid moiety-binding region" description="S-geranylgeranyl cysteine" evidence="1">
    <location>
        <position position="199"/>
    </location>
</feature>
<feature type="strand" evidence="4">
    <location>
        <begin position="6"/>
        <end position="14"/>
    </location>
</feature>
<feature type="helix" evidence="4">
    <location>
        <begin position="19"/>
        <end position="28"/>
    </location>
</feature>
<feature type="strand" evidence="4">
    <location>
        <begin position="43"/>
        <end position="49"/>
    </location>
</feature>
<feature type="strand" evidence="4">
    <location>
        <begin position="52"/>
        <end position="59"/>
    </location>
</feature>
<feature type="turn" evidence="4">
    <location>
        <begin position="68"/>
        <end position="70"/>
    </location>
</feature>
<feature type="helix" evidence="4">
    <location>
        <begin position="71"/>
        <end position="74"/>
    </location>
</feature>
<feature type="strand" evidence="4">
    <location>
        <begin position="79"/>
        <end position="86"/>
    </location>
</feature>
<feature type="helix" evidence="4">
    <location>
        <begin position="90"/>
        <end position="98"/>
    </location>
</feature>
<feature type="helix" evidence="4">
    <location>
        <begin position="100"/>
        <end position="107"/>
    </location>
</feature>
<feature type="strand" evidence="4">
    <location>
        <begin position="109"/>
        <end position="111"/>
    </location>
</feature>
<feature type="strand" evidence="4">
    <location>
        <begin position="113"/>
        <end position="118"/>
    </location>
</feature>
<feature type="helix" evidence="4">
    <location>
        <begin position="120"/>
        <end position="122"/>
    </location>
</feature>
<feature type="helix" evidence="4">
    <location>
        <begin position="126"/>
        <end position="134"/>
    </location>
</feature>
<feature type="helix" evidence="4">
    <location>
        <begin position="142"/>
        <end position="151"/>
    </location>
</feature>
<feature type="strand" evidence="4">
    <location>
        <begin position="155"/>
        <end position="159"/>
    </location>
</feature>
<feature type="turn" evidence="4">
    <location>
        <begin position="162"/>
        <end position="164"/>
    </location>
</feature>
<feature type="helix" evidence="4">
    <location>
        <begin position="168"/>
        <end position="179"/>
    </location>
</feature>
<proteinExistence type="evidence at protein level"/>
<organism>
    <name type="scientific">Schizosaccharomyces pombe (strain 972 / ATCC 24843)</name>
    <name type="common">Fission yeast</name>
    <dbReference type="NCBI Taxonomy" id="284812"/>
    <lineage>
        <taxon>Eukaryota</taxon>
        <taxon>Fungi</taxon>
        <taxon>Dikarya</taxon>
        <taxon>Ascomycota</taxon>
        <taxon>Taphrinomycotina</taxon>
        <taxon>Schizosaccharomycetes</taxon>
        <taxon>Schizosaccharomycetales</taxon>
        <taxon>Schizosaccharomycetaceae</taxon>
        <taxon>Schizosaccharomyces</taxon>
    </lineage>
</organism>
<evidence type="ECO:0000250" key="1"/>
<evidence type="ECO:0000269" key="2">
    <source>
    </source>
</evidence>
<evidence type="ECO:0000305" key="3"/>
<evidence type="ECO:0007829" key="4">
    <source>
        <dbReference type="PDB" id="8ETD"/>
    </source>
</evidence>
<name>RHO1_SCHPO</name>